<accession>Q54B29</accession>
<proteinExistence type="predicted"/>
<protein>
    <recommendedName>
        <fullName>Uncharacterized membrane protein DDB_G0293934</fullName>
    </recommendedName>
</protein>
<comment type="subcellular location">
    <subcellularLocation>
        <location evidence="5">Membrane</location>
        <topology evidence="5">Multi-pass membrane protein</topology>
    </subcellularLocation>
</comment>
<evidence type="ECO:0000255" key="1"/>
<evidence type="ECO:0000255" key="2">
    <source>
        <dbReference type="PROSITE-ProRule" id="PRU00850"/>
    </source>
</evidence>
<evidence type="ECO:0000255" key="3">
    <source>
        <dbReference type="PROSITE-ProRule" id="PRU01025"/>
    </source>
</evidence>
<evidence type="ECO:0000256" key="4">
    <source>
        <dbReference type="SAM" id="MobiDB-lite"/>
    </source>
</evidence>
<evidence type="ECO:0000305" key="5"/>
<name>Y3934_DICDI</name>
<gene>
    <name type="ORF">DDB_G0293934</name>
</gene>
<sequence>MNENEFSTNSLINQQGTNNNNNNNTNNNITNINFGTENNNNSPIINNNNNNNNNNNNNINIVESPPLVIRQQQLFNNFQQLNTPPTTPNTSTPSTPTSSRNNNNNNNNNIDFYNSKFLPPKPKSLNNSGNYLNNNNNINNNNNNNNNNHHNNNNNNNNNINFTNLSNSGNSLKFNKNMSDITNDNSNSSSNAGSNSKLSNSNGCSNLLTSSFNNILNSTNVQVVSGNNNYHNGNNENGNNTFHVGNNLNNNNNNNNIGSSGGNNSHHHHNHSHHNSGNHQNGGSNGQPLSYSYDNLFNNLYADIQHPHQYLSNHSGNNINNTSQSNNNNNNNNNNNNNNNNNNNNNNNNSNNNNNNNSNNNNNNNNNNNNNNNNNNNNNSNNSNSNNTNNSNSNHNNNNNHNNNNNNNNNNSNNNNIHGNSNNNNNNNHGSSYVTPSSDISSPSPPSSTSMASIVSSPPVQVSPLQSPASHLSPMSPSNNFGGNHNNYNHAHHSHHNNHAHHNTHNYNNNNNNNNNNNNNNNNNNNNSNNSNNNSNTNNNGNNGNNSNNNNNHPMSHIDAFNKVTQLTSTTSTSIPKKLKRDYEQTFSKDEWEDYTPPSKYFQLFSYSKSEMSGSFSFKVKRTDKNIQYSELDSAWILYRQNRFQVDCDLIGSLESWSNLDRNNTIFVNSNNNNNNNNNNNNNNDNGDLSEVNGLFFTLYVLKFTDANNIQSSNDQNDRVPIHQLGGATGKKDRLTVEPSPVVKGRGCWNKLQFGSATSNNARVHPDQPNPNQQFFRVVITLNAVIDKNFENQNFTTPQFYPIQSKISPPMIVRGQNPGRFLNHDKSLKKDPNSSPNGGKGGGGSGSGGMGGGMGGGMGNNGSSGSSSNGGYGNGSANKHMKTFLNTSNSDNSDDDQSPTTTTTTTTTTTTPTPTPTTTTTTTNETTTSTIPTTTPLPKTPSPTLTAPSITTTLDGNNTSIFNGPCDLTTIDPLTFSNLLQDPLILGQTMMVDIDSNNILNNINTNSTINNNNNNNNTNSDDLMVYDPQTTLDLANLIQQQQLHQQQQLSNLKAAQAAAAIAASIANTTSTPNTTSTDIQNPFNFLNNPLTNTNIQQSLFLNQNIPGVSTNQMINSLNLANGLLQNTTTPQSHHTILEINNNHHHHQQQQQQPITTTTTTTTTIPSTPQPSQQSMTNSGGSSSTNSSISRKNKFAKWNTNPFMEEVIYTNNKVGINTTTPTQALAVNGNILVTGELFKPSDQRIKSNIRLDNTDHWDKINRLKIYDYDRKKMMGYDDPNNNGTTQESTTVKEKGFLAQEVKEVLPNAVKVAGEVKLQDGTTVPNLLVVNDRVLLLENIGATQQIGRSLKKEKDHIVKIDRDLDRVKIEGSREKHVILTRMQDMVNFMHSEESERSNNNNEESCVYCSLMGFGPAWTMFVFGFFIPICWIIGSFYLFSPTRVKWVSGLMNFVATIIFILALSLMTFYVPELAALIIAPALIVMGFVVCILVGFFRQRNREKKRYLRERIKLMQADGYKNLADHVSSFRVDYNQHQAKANNNMLKKKKKRIQMEKLNSQRNYGGINTTDKINNSNINNIGINNPNNIQNNQINNILNNSNNNINNNNQERLSDSSKSSFIDDFKKSSSNNHKDFHEIPLQEIIQSIGIKGKKQSSSSAKTRSLSSSNLVNSVNSNLVNSTNSNNTSILLKSHNSNSPLFNSTPTPTNVVFNSIEV</sequence>
<keyword id="KW-0238">DNA-binding</keyword>
<keyword id="KW-0472">Membrane</keyword>
<keyword id="KW-1185">Reference proteome</keyword>
<keyword id="KW-0812">Transmembrane</keyword>
<keyword id="KW-1133">Transmembrane helix</keyword>
<dbReference type="EMBL" id="AAFI02000224">
    <property type="protein sequence ID" value="EAL60466.1"/>
    <property type="molecule type" value="Genomic_DNA"/>
</dbReference>
<dbReference type="RefSeq" id="XP_628887.1">
    <property type="nucleotide sequence ID" value="XM_628885.1"/>
</dbReference>
<dbReference type="SMR" id="Q54B29"/>
<dbReference type="FunCoup" id="Q54B29">
    <property type="interactions" value="456"/>
</dbReference>
<dbReference type="GlyGen" id="Q54B29">
    <property type="glycosylation" value="4 sites"/>
</dbReference>
<dbReference type="PaxDb" id="44689-DDB0231107"/>
<dbReference type="EnsemblProtists" id="EAL60466">
    <property type="protein sequence ID" value="EAL60466"/>
    <property type="gene ID" value="DDB_G0293934"/>
</dbReference>
<dbReference type="GeneID" id="8629502"/>
<dbReference type="KEGG" id="ddi:DDB_G0293934"/>
<dbReference type="dictyBase" id="DDB_G0293934"/>
<dbReference type="VEuPathDB" id="AmoebaDB:DDB_G0293934"/>
<dbReference type="eggNOG" id="KOG3661">
    <property type="taxonomic scope" value="Eukaryota"/>
</dbReference>
<dbReference type="HOGENOM" id="CLU_240514_0_0_1"/>
<dbReference type="InParanoid" id="Q54B29"/>
<dbReference type="OMA" id="RFLNHDK"/>
<dbReference type="PRO" id="PR:Q54B29"/>
<dbReference type="Proteomes" id="UP000002195">
    <property type="component" value="Chromosome 6"/>
</dbReference>
<dbReference type="GO" id="GO:0005789">
    <property type="term" value="C:endoplasmic reticulum membrane"/>
    <property type="evidence" value="ECO:0000318"/>
    <property type="project" value="GO_Central"/>
</dbReference>
<dbReference type="GO" id="GO:0005634">
    <property type="term" value="C:nucleus"/>
    <property type="evidence" value="ECO:0000318"/>
    <property type="project" value="GO_Central"/>
</dbReference>
<dbReference type="GO" id="GO:0003700">
    <property type="term" value="F:DNA-binding transcription factor activity"/>
    <property type="evidence" value="ECO:0000318"/>
    <property type="project" value="GO_Central"/>
</dbReference>
<dbReference type="GO" id="GO:0043565">
    <property type="term" value="F:sequence-specific DNA binding"/>
    <property type="evidence" value="ECO:0000318"/>
    <property type="project" value="GO_Central"/>
</dbReference>
<dbReference type="GO" id="GO:0045893">
    <property type="term" value="P:positive regulation of DNA-templated transcription"/>
    <property type="evidence" value="ECO:0000318"/>
    <property type="project" value="GO_Central"/>
</dbReference>
<dbReference type="GO" id="GO:0016540">
    <property type="term" value="P:protein autoprocessing"/>
    <property type="evidence" value="ECO:0000318"/>
    <property type="project" value="GO_Central"/>
</dbReference>
<dbReference type="InterPro" id="IPR051577">
    <property type="entry name" value="MRF-like"/>
</dbReference>
<dbReference type="InterPro" id="IPR024061">
    <property type="entry name" value="NDT80_DNA-bd_dom"/>
</dbReference>
<dbReference type="InterPro" id="IPR008967">
    <property type="entry name" value="p53-like_TF_DNA-bd_sf"/>
</dbReference>
<dbReference type="InterPro" id="IPR030392">
    <property type="entry name" value="S74_ICA"/>
</dbReference>
<dbReference type="PANTHER" id="PTHR13029">
    <property type="match status" value="1"/>
</dbReference>
<dbReference type="PANTHER" id="PTHR13029:SF19">
    <property type="entry name" value="NDT80 DOMAIN-CONTAINING PROTEIN"/>
    <property type="match status" value="1"/>
</dbReference>
<dbReference type="Pfam" id="PF13884">
    <property type="entry name" value="Peptidase_S74"/>
    <property type="match status" value="1"/>
</dbReference>
<dbReference type="SUPFAM" id="SSF49417">
    <property type="entry name" value="p53-like transcription factors"/>
    <property type="match status" value="1"/>
</dbReference>
<dbReference type="PROSITE" id="PS51688">
    <property type="entry name" value="ICA"/>
    <property type="match status" value="1"/>
</dbReference>
<dbReference type="PROSITE" id="PS51517">
    <property type="entry name" value="NDT80"/>
    <property type="match status" value="1"/>
</dbReference>
<reference key="1">
    <citation type="journal article" date="2005" name="Nature">
        <title>The genome of the social amoeba Dictyostelium discoideum.</title>
        <authorList>
            <person name="Eichinger L."/>
            <person name="Pachebat J.A."/>
            <person name="Gloeckner G."/>
            <person name="Rajandream M.A."/>
            <person name="Sucgang R."/>
            <person name="Berriman M."/>
            <person name="Song J."/>
            <person name="Olsen R."/>
            <person name="Szafranski K."/>
            <person name="Xu Q."/>
            <person name="Tunggal B."/>
            <person name="Kummerfeld S."/>
            <person name="Madera M."/>
            <person name="Konfortov B.A."/>
            <person name="Rivero F."/>
            <person name="Bankier A.T."/>
            <person name="Lehmann R."/>
            <person name="Hamlin N."/>
            <person name="Davies R."/>
            <person name="Gaudet P."/>
            <person name="Fey P."/>
            <person name="Pilcher K."/>
            <person name="Chen G."/>
            <person name="Saunders D."/>
            <person name="Sodergren E.J."/>
            <person name="Davis P."/>
            <person name="Kerhornou A."/>
            <person name="Nie X."/>
            <person name="Hall N."/>
            <person name="Anjard C."/>
            <person name="Hemphill L."/>
            <person name="Bason N."/>
            <person name="Farbrother P."/>
            <person name="Desany B."/>
            <person name="Just E."/>
            <person name="Morio T."/>
            <person name="Rost R."/>
            <person name="Churcher C.M."/>
            <person name="Cooper J."/>
            <person name="Haydock S."/>
            <person name="van Driessche N."/>
            <person name="Cronin A."/>
            <person name="Goodhead I."/>
            <person name="Muzny D.M."/>
            <person name="Mourier T."/>
            <person name="Pain A."/>
            <person name="Lu M."/>
            <person name="Harper D."/>
            <person name="Lindsay R."/>
            <person name="Hauser H."/>
            <person name="James K.D."/>
            <person name="Quiles M."/>
            <person name="Madan Babu M."/>
            <person name="Saito T."/>
            <person name="Buchrieser C."/>
            <person name="Wardroper A."/>
            <person name="Felder M."/>
            <person name="Thangavelu M."/>
            <person name="Johnson D."/>
            <person name="Knights A."/>
            <person name="Loulseged H."/>
            <person name="Mungall K.L."/>
            <person name="Oliver K."/>
            <person name="Price C."/>
            <person name="Quail M.A."/>
            <person name="Urushihara H."/>
            <person name="Hernandez J."/>
            <person name="Rabbinowitsch E."/>
            <person name="Steffen D."/>
            <person name="Sanders M."/>
            <person name="Ma J."/>
            <person name="Kohara Y."/>
            <person name="Sharp S."/>
            <person name="Simmonds M.N."/>
            <person name="Spiegler S."/>
            <person name="Tivey A."/>
            <person name="Sugano S."/>
            <person name="White B."/>
            <person name="Walker D."/>
            <person name="Woodward J.R."/>
            <person name="Winckler T."/>
            <person name="Tanaka Y."/>
            <person name="Shaulsky G."/>
            <person name="Schleicher M."/>
            <person name="Weinstock G.M."/>
            <person name="Rosenthal A."/>
            <person name="Cox E.C."/>
            <person name="Chisholm R.L."/>
            <person name="Gibbs R.A."/>
            <person name="Loomis W.F."/>
            <person name="Platzer M."/>
            <person name="Kay R.R."/>
            <person name="Williams J.G."/>
            <person name="Dear P.H."/>
            <person name="Noegel A.A."/>
            <person name="Barrell B.G."/>
            <person name="Kuspa A."/>
        </authorList>
    </citation>
    <scope>NUCLEOTIDE SEQUENCE [LARGE SCALE GENOMIC DNA]</scope>
    <source>
        <strain>AX4</strain>
    </source>
</reference>
<feature type="chain" id="PRO_0000371410" description="Uncharacterized membrane protein DDB_G0293934">
    <location>
        <begin position="1"/>
        <end position="1713"/>
    </location>
</feature>
<feature type="transmembrane region" description="Helical" evidence="1">
    <location>
        <begin position="1416"/>
        <end position="1436"/>
    </location>
</feature>
<feature type="transmembrane region" description="Helical" evidence="1">
    <location>
        <begin position="1447"/>
        <end position="1467"/>
    </location>
</feature>
<feature type="transmembrane region" description="Helical" evidence="1">
    <location>
        <begin position="1473"/>
        <end position="1493"/>
    </location>
</feature>
<feature type="domain" description="Peptidase S74" evidence="3">
    <location>
        <begin position="1240"/>
        <end position="1355"/>
    </location>
</feature>
<feature type="DNA-binding region" description="NDT80" evidence="2">
    <location>
        <begin position="544"/>
        <end position="825"/>
    </location>
</feature>
<feature type="region of interest" description="Disordered" evidence="4">
    <location>
        <begin position="1"/>
        <end position="35"/>
    </location>
</feature>
<feature type="region of interest" description="Disordered" evidence="4">
    <location>
        <begin position="79"/>
        <end position="200"/>
    </location>
</feature>
<feature type="region of interest" description="Disordered" evidence="4">
    <location>
        <begin position="226"/>
        <end position="290"/>
    </location>
</feature>
<feature type="region of interest" description="Disordered" evidence="4">
    <location>
        <begin position="309"/>
        <end position="557"/>
    </location>
</feature>
<feature type="region of interest" description="Disordered" evidence="4">
    <location>
        <begin position="713"/>
        <end position="734"/>
    </location>
</feature>
<feature type="region of interest" description="Disordered" evidence="4">
    <location>
        <begin position="808"/>
        <end position="952"/>
    </location>
</feature>
<feature type="region of interest" description="Disordered" evidence="4">
    <location>
        <begin position="1143"/>
        <end position="1190"/>
    </location>
</feature>
<feature type="region of interest" description="Disordered" evidence="4">
    <location>
        <begin position="1596"/>
        <end position="1634"/>
    </location>
</feature>
<feature type="region of interest" description="Disordered" evidence="4">
    <location>
        <begin position="1646"/>
        <end position="1665"/>
    </location>
</feature>
<feature type="compositionally biased region" description="Polar residues" evidence="4">
    <location>
        <begin position="1"/>
        <end position="12"/>
    </location>
</feature>
<feature type="compositionally biased region" description="Low complexity" evidence="4">
    <location>
        <begin position="13"/>
        <end position="35"/>
    </location>
</feature>
<feature type="compositionally biased region" description="Low complexity" evidence="4">
    <location>
        <begin position="79"/>
        <end position="109"/>
    </location>
</feature>
<feature type="compositionally biased region" description="Low complexity" evidence="4">
    <location>
        <begin position="126"/>
        <end position="170"/>
    </location>
</feature>
<feature type="compositionally biased region" description="Low complexity" evidence="4">
    <location>
        <begin position="177"/>
        <end position="200"/>
    </location>
</feature>
<feature type="compositionally biased region" description="Low complexity" evidence="4">
    <location>
        <begin position="226"/>
        <end position="264"/>
    </location>
</feature>
<feature type="compositionally biased region" description="Basic residues" evidence="4">
    <location>
        <begin position="265"/>
        <end position="276"/>
    </location>
</feature>
<feature type="compositionally biased region" description="Low complexity" evidence="4">
    <location>
        <begin position="317"/>
        <end position="470"/>
    </location>
</feature>
<feature type="compositionally biased region" description="Low complexity" evidence="4">
    <location>
        <begin position="478"/>
        <end position="489"/>
    </location>
</feature>
<feature type="compositionally biased region" description="Basic residues" evidence="4">
    <location>
        <begin position="490"/>
        <end position="504"/>
    </location>
</feature>
<feature type="compositionally biased region" description="Low complexity" evidence="4">
    <location>
        <begin position="505"/>
        <end position="553"/>
    </location>
</feature>
<feature type="compositionally biased region" description="Basic and acidic residues" evidence="4">
    <location>
        <begin position="822"/>
        <end position="832"/>
    </location>
</feature>
<feature type="compositionally biased region" description="Gly residues" evidence="4">
    <location>
        <begin position="838"/>
        <end position="874"/>
    </location>
</feature>
<feature type="compositionally biased region" description="Low complexity" evidence="4">
    <location>
        <begin position="898"/>
        <end position="946"/>
    </location>
</feature>
<feature type="compositionally biased region" description="Low complexity" evidence="4">
    <location>
        <begin position="1148"/>
        <end position="1189"/>
    </location>
</feature>
<feature type="compositionally biased region" description="Low complexity" evidence="4">
    <location>
        <begin position="1596"/>
        <end position="1605"/>
    </location>
</feature>
<feature type="compositionally biased region" description="Basic and acidic residues" evidence="4">
    <location>
        <begin position="1617"/>
        <end position="1634"/>
    </location>
</feature>
<feature type="site" description="Cleavage; by autolysis" evidence="3">
    <location>
        <begin position="1239"/>
        <end position="1240"/>
    </location>
</feature>
<organism>
    <name type="scientific">Dictyostelium discoideum</name>
    <name type="common">Social amoeba</name>
    <dbReference type="NCBI Taxonomy" id="44689"/>
    <lineage>
        <taxon>Eukaryota</taxon>
        <taxon>Amoebozoa</taxon>
        <taxon>Evosea</taxon>
        <taxon>Eumycetozoa</taxon>
        <taxon>Dictyostelia</taxon>
        <taxon>Dictyosteliales</taxon>
        <taxon>Dictyosteliaceae</taxon>
        <taxon>Dictyostelium</taxon>
    </lineage>
</organism>